<accession>O00142</accession>
<accession>B4DGJ7</accession>
<accession>B4DZK7</accession>
<accession>B7ZAB1</accession>
<accession>E5KNQ5</accession>
<accession>E9PH08</accession>
<accession>O15238</accession>
<gene>
    <name evidence="15 18" type="primary">TK2</name>
</gene>
<dbReference type="EC" id="2.7.1.21" evidence="3 11"/>
<dbReference type="EC" id="2.7.1.74" evidence="17"/>
<dbReference type="EC" id="2.7.1.-" evidence="3 17"/>
<dbReference type="EMBL" id="U77088">
    <property type="protein sequence ID" value="AAC51167.1"/>
    <property type="molecule type" value="mRNA"/>
</dbReference>
<dbReference type="EMBL" id="Y10498">
    <property type="protein sequence ID" value="CAA71523.3"/>
    <property type="molecule type" value="mRNA"/>
</dbReference>
<dbReference type="EMBL" id="AK294627">
    <property type="protein sequence ID" value="BAG57808.1"/>
    <property type="molecule type" value="mRNA"/>
</dbReference>
<dbReference type="EMBL" id="AK302976">
    <property type="protein sequence ID" value="BAG64119.1"/>
    <property type="molecule type" value="mRNA"/>
</dbReference>
<dbReference type="EMBL" id="AK316226">
    <property type="protein sequence ID" value="BAH14597.1"/>
    <property type="molecule type" value="mRNA"/>
</dbReference>
<dbReference type="EMBL" id="AC010542">
    <property type="status" value="NOT_ANNOTATED_CDS"/>
    <property type="molecule type" value="Genomic_DNA"/>
</dbReference>
<dbReference type="EMBL" id="CH471092">
    <property type="protein sequence ID" value="EAW83013.1"/>
    <property type="molecule type" value="Genomic_DNA"/>
</dbReference>
<dbReference type="EMBL" id="CH471092">
    <property type="protein sequence ID" value="EAW83015.1"/>
    <property type="molecule type" value="Genomic_DNA"/>
</dbReference>
<dbReference type="EMBL" id="CH471092">
    <property type="protein sequence ID" value="EAW83017.1"/>
    <property type="molecule type" value="Genomic_DNA"/>
</dbReference>
<dbReference type="EMBL" id="HQ205385">
    <property type="protein sequence ID" value="ADP90853.1"/>
    <property type="molecule type" value="Genomic_DNA"/>
</dbReference>
<dbReference type="EMBL" id="HQ205382">
    <property type="protein sequence ID" value="ADP90850.1"/>
    <property type="molecule type" value="Genomic_DNA"/>
</dbReference>
<dbReference type="EMBL" id="HQ205383">
    <property type="protein sequence ID" value="ADP90851.1"/>
    <property type="molecule type" value="Genomic_DNA"/>
</dbReference>
<dbReference type="EMBL" id="HQ205384">
    <property type="protein sequence ID" value="ADP90852.1"/>
    <property type="molecule type" value="Genomic_DNA"/>
</dbReference>
<dbReference type="EMBL" id="HQ205381">
    <property type="protein sequence ID" value="ADP90849.1"/>
    <property type="molecule type" value="Genomic_DNA"/>
</dbReference>
<dbReference type="EMBL" id="HQ205380">
    <property type="protein sequence ID" value="ADP90848.1"/>
    <property type="molecule type" value="Genomic_DNA"/>
</dbReference>
<dbReference type="EMBL" id="HQ205379">
    <property type="protein sequence ID" value="ADP90847.1"/>
    <property type="molecule type" value="Genomic_DNA"/>
</dbReference>
<dbReference type="EMBL" id="HQ205378">
    <property type="protein sequence ID" value="ADP90846.1"/>
    <property type="molecule type" value="Genomic_DNA"/>
</dbReference>
<dbReference type="EMBL" id="HQ205377">
    <property type="protein sequence ID" value="ADP90845.1"/>
    <property type="molecule type" value="Genomic_DNA"/>
</dbReference>
<dbReference type="EMBL" id="HQ205376">
    <property type="protein sequence ID" value="ADP90844.1"/>
    <property type="molecule type" value="Genomic_DNA"/>
</dbReference>
<dbReference type="EMBL" id="HQ205375">
    <property type="protein sequence ID" value="ADP90843.1"/>
    <property type="molecule type" value="Genomic_DNA"/>
</dbReference>
<dbReference type="EMBL" id="HQ205374">
    <property type="protein sequence ID" value="ADP90842.1"/>
    <property type="molecule type" value="Genomic_DNA"/>
</dbReference>
<dbReference type="EMBL" id="HQ205373">
    <property type="protein sequence ID" value="ADP90841.1"/>
    <property type="molecule type" value="Genomic_DNA"/>
</dbReference>
<dbReference type="EMBL" id="HQ205372">
    <property type="protein sequence ID" value="ADP90840.1"/>
    <property type="molecule type" value="Genomic_DNA"/>
</dbReference>
<dbReference type="EMBL" id="HQ205371">
    <property type="protein sequence ID" value="ADP90839.1"/>
    <property type="molecule type" value="Genomic_DNA"/>
</dbReference>
<dbReference type="EMBL" id="HQ205370">
    <property type="protein sequence ID" value="ADP90838.1"/>
    <property type="molecule type" value="Genomic_DNA"/>
</dbReference>
<dbReference type="EMBL" id="HQ205362">
    <property type="protein sequence ID" value="ADP90830.1"/>
    <property type="molecule type" value="Genomic_DNA"/>
</dbReference>
<dbReference type="EMBL" id="HQ205363">
    <property type="protein sequence ID" value="ADP90831.1"/>
    <property type="molecule type" value="Genomic_DNA"/>
</dbReference>
<dbReference type="EMBL" id="HQ205364">
    <property type="protein sequence ID" value="ADP90832.1"/>
    <property type="molecule type" value="Genomic_DNA"/>
</dbReference>
<dbReference type="EMBL" id="HQ205365">
    <property type="protein sequence ID" value="ADP90833.1"/>
    <property type="molecule type" value="Genomic_DNA"/>
</dbReference>
<dbReference type="EMBL" id="HQ205366">
    <property type="protein sequence ID" value="ADP90834.1"/>
    <property type="molecule type" value="Genomic_DNA"/>
</dbReference>
<dbReference type="EMBL" id="HQ205367">
    <property type="protein sequence ID" value="ADP90835.1"/>
    <property type="molecule type" value="Genomic_DNA"/>
</dbReference>
<dbReference type="EMBL" id="HQ205368">
    <property type="protein sequence ID" value="ADP90836.1"/>
    <property type="molecule type" value="Genomic_DNA"/>
</dbReference>
<dbReference type="EMBL" id="HQ205369">
    <property type="protein sequence ID" value="ADP90837.1"/>
    <property type="molecule type" value="Genomic_DNA"/>
</dbReference>
<dbReference type="EMBL" id="HQ205346">
    <property type="protein sequence ID" value="ADP90814.1"/>
    <property type="molecule type" value="Genomic_DNA"/>
</dbReference>
<dbReference type="EMBL" id="HQ205347">
    <property type="protein sequence ID" value="ADP90815.1"/>
    <property type="molecule type" value="Genomic_DNA"/>
</dbReference>
<dbReference type="EMBL" id="HQ205348">
    <property type="protein sequence ID" value="ADP90816.1"/>
    <property type="molecule type" value="Genomic_DNA"/>
</dbReference>
<dbReference type="EMBL" id="HQ205349">
    <property type="protein sequence ID" value="ADP90817.1"/>
    <property type="molecule type" value="Genomic_DNA"/>
</dbReference>
<dbReference type="EMBL" id="HQ205350">
    <property type="protein sequence ID" value="ADP90818.1"/>
    <property type="molecule type" value="Genomic_DNA"/>
</dbReference>
<dbReference type="EMBL" id="HQ205351">
    <property type="protein sequence ID" value="ADP90819.1"/>
    <property type="molecule type" value="Genomic_DNA"/>
</dbReference>
<dbReference type="EMBL" id="HQ205352">
    <property type="protein sequence ID" value="ADP90820.1"/>
    <property type="molecule type" value="Genomic_DNA"/>
</dbReference>
<dbReference type="EMBL" id="HQ205353">
    <property type="protein sequence ID" value="ADP90821.1"/>
    <property type="molecule type" value="Genomic_DNA"/>
</dbReference>
<dbReference type="EMBL" id="HQ205354">
    <property type="protein sequence ID" value="ADP90822.1"/>
    <property type="molecule type" value="Genomic_DNA"/>
</dbReference>
<dbReference type="EMBL" id="HQ205355">
    <property type="protein sequence ID" value="ADP90823.1"/>
    <property type="molecule type" value="Genomic_DNA"/>
</dbReference>
<dbReference type="EMBL" id="HQ205356">
    <property type="protein sequence ID" value="ADP90824.1"/>
    <property type="molecule type" value="Genomic_DNA"/>
</dbReference>
<dbReference type="EMBL" id="HQ205357">
    <property type="protein sequence ID" value="ADP90825.1"/>
    <property type="molecule type" value="Genomic_DNA"/>
</dbReference>
<dbReference type="EMBL" id="HQ205358">
    <property type="protein sequence ID" value="ADP90826.1"/>
    <property type="molecule type" value="Genomic_DNA"/>
</dbReference>
<dbReference type="EMBL" id="HQ205359">
    <property type="protein sequence ID" value="ADP90827.1"/>
    <property type="molecule type" value="Genomic_DNA"/>
</dbReference>
<dbReference type="EMBL" id="HQ205360">
    <property type="protein sequence ID" value="ADP90828.1"/>
    <property type="molecule type" value="Genomic_DNA"/>
</dbReference>
<dbReference type="EMBL" id="HQ205361">
    <property type="protein sequence ID" value="ADP90829.1"/>
    <property type="molecule type" value="Genomic_DNA"/>
</dbReference>
<dbReference type="CCDS" id="CCDS10805.2">
    <molecule id="O00142-1"/>
</dbReference>
<dbReference type="CCDS" id="CCDS54016.1">
    <molecule id="O00142-3"/>
</dbReference>
<dbReference type="CCDS" id="CCDS54017.1">
    <molecule id="O00142-4"/>
</dbReference>
<dbReference type="CCDS" id="CCDS54018.1">
    <molecule id="O00142-2"/>
</dbReference>
<dbReference type="CCDS" id="CCDS61955.1">
    <molecule id="O00142-5"/>
</dbReference>
<dbReference type="RefSeq" id="NP_001166114.1">
    <molecule id="O00142-2"/>
    <property type="nucleotide sequence ID" value="NM_001172643.1"/>
</dbReference>
<dbReference type="RefSeq" id="NP_001166115.1">
    <molecule id="O00142-3"/>
    <property type="nucleotide sequence ID" value="NM_001172644.2"/>
</dbReference>
<dbReference type="RefSeq" id="NP_001166116.1">
    <molecule id="O00142-4"/>
    <property type="nucleotide sequence ID" value="NM_001172645.2"/>
</dbReference>
<dbReference type="RefSeq" id="NP_001258864.1">
    <property type="nucleotide sequence ID" value="NM_001271935.1"/>
</dbReference>
<dbReference type="RefSeq" id="NP_001258979.1">
    <molecule id="O00142-5"/>
    <property type="nucleotide sequence ID" value="NM_001272050.2"/>
</dbReference>
<dbReference type="RefSeq" id="NP_004605.4">
    <molecule id="O00142-1"/>
    <property type="nucleotide sequence ID" value="NM_004614.4"/>
</dbReference>
<dbReference type="SMR" id="O00142"/>
<dbReference type="BioGRID" id="112939">
    <property type="interactions" value="17"/>
</dbReference>
<dbReference type="FunCoup" id="O00142">
    <property type="interactions" value="1901"/>
</dbReference>
<dbReference type="IntAct" id="O00142">
    <property type="interactions" value="8"/>
</dbReference>
<dbReference type="STRING" id="9606.ENSP00000299697"/>
<dbReference type="BindingDB" id="O00142"/>
<dbReference type="ChEMBL" id="CHEMBL4580"/>
<dbReference type="DrugBank" id="DB02594">
    <property type="generic name" value="2'-Deoxycytidine"/>
</dbReference>
<dbReference type="DrugBank" id="DB03312">
    <property type="generic name" value="Brivudine"/>
</dbReference>
<dbReference type="DrugBank" id="DB00441">
    <property type="generic name" value="Gemcitabine"/>
</dbReference>
<dbReference type="DrugBank" id="DB04485">
    <property type="generic name" value="Thymidine"/>
</dbReference>
<dbReference type="DrugBank" id="DB02452">
    <property type="generic name" value="Thymidine 5'-triphosphate"/>
</dbReference>
<dbReference type="DrugCentral" id="O00142"/>
<dbReference type="iPTMnet" id="O00142"/>
<dbReference type="PhosphoSitePlus" id="O00142"/>
<dbReference type="BioMuta" id="TK2"/>
<dbReference type="jPOST" id="O00142"/>
<dbReference type="MassIVE" id="O00142"/>
<dbReference type="PaxDb" id="9606-ENSP00000299697"/>
<dbReference type="PeptideAtlas" id="O00142"/>
<dbReference type="ProteomicsDB" id="20434"/>
<dbReference type="ProteomicsDB" id="47731">
    <molecule id="O00142-1"/>
</dbReference>
<dbReference type="ProteomicsDB" id="47732">
    <molecule id="O00142-2"/>
</dbReference>
<dbReference type="ProteomicsDB" id="47733">
    <molecule id="O00142-3"/>
</dbReference>
<dbReference type="ProteomicsDB" id="5605"/>
<dbReference type="Pumba" id="O00142"/>
<dbReference type="Antibodypedia" id="29252">
    <property type="antibodies" value="65 antibodies from 16 providers"/>
</dbReference>
<dbReference type="DNASU" id="7084"/>
<dbReference type="Ensembl" id="ENST00000417693.8">
    <molecule id="O00142-4"/>
    <property type="protein sequence ID" value="ENSP00000407469.5"/>
    <property type="gene ID" value="ENSG00000166548.17"/>
</dbReference>
<dbReference type="Ensembl" id="ENST00000451102.7">
    <molecule id="O00142-2"/>
    <property type="protein sequence ID" value="ENSP00000414334.4"/>
    <property type="gene ID" value="ENSG00000166548.17"/>
</dbReference>
<dbReference type="Ensembl" id="ENST00000525974.5">
    <molecule id="O00142-5"/>
    <property type="protein sequence ID" value="ENSP00000434594.1"/>
    <property type="gene ID" value="ENSG00000166548.17"/>
</dbReference>
<dbReference type="Ensembl" id="ENST00000527800.6">
    <molecule id="O00142-5"/>
    <property type="protein sequence ID" value="ENSP00000433770.1"/>
    <property type="gene ID" value="ENSG00000166548.17"/>
</dbReference>
<dbReference type="Ensembl" id="ENST00000544898.6">
    <molecule id="O00142-1"/>
    <property type="protein sequence ID" value="ENSP00000440898.2"/>
    <property type="gene ID" value="ENSG00000166548.17"/>
</dbReference>
<dbReference type="Ensembl" id="ENST00000545043.6">
    <molecule id="O00142-3"/>
    <property type="protein sequence ID" value="ENSP00000438143.2"/>
    <property type="gene ID" value="ENSG00000166548.17"/>
</dbReference>
<dbReference type="Ensembl" id="ENST00000563369.6">
    <molecule id="O00142-5"/>
    <property type="protein sequence ID" value="ENSP00000463560.1"/>
    <property type="gene ID" value="ENSG00000166548.17"/>
</dbReference>
<dbReference type="Ensembl" id="ENST00000677420.1">
    <molecule id="O00142-5"/>
    <property type="protein sequence ID" value="ENSP00000504648.1"/>
    <property type="gene ID" value="ENSG00000166548.17"/>
</dbReference>
<dbReference type="Ensembl" id="ENST00000677555.1">
    <molecule id="O00142-5"/>
    <property type="protein sequence ID" value="ENSP00000503331.1"/>
    <property type="gene ID" value="ENSG00000166548.17"/>
</dbReference>
<dbReference type="Ensembl" id="ENST00000677715.1">
    <molecule id="O00142-5"/>
    <property type="protein sequence ID" value="ENSP00000502950.1"/>
    <property type="gene ID" value="ENSG00000166548.17"/>
</dbReference>
<dbReference type="Ensembl" id="ENST00000678015.1">
    <molecule id="O00142-5"/>
    <property type="protein sequence ID" value="ENSP00000502959.1"/>
    <property type="gene ID" value="ENSG00000166548.17"/>
</dbReference>
<dbReference type="Ensembl" id="ENST00000678297.1">
    <molecule id="O00142-5"/>
    <property type="protein sequence ID" value="ENSP00000503472.1"/>
    <property type="gene ID" value="ENSG00000166548.17"/>
</dbReference>
<dbReference type="GeneID" id="7084"/>
<dbReference type="KEGG" id="hsa:7084"/>
<dbReference type="MANE-Select" id="ENST00000544898.6">
    <property type="protein sequence ID" value="ENSP00000440898.2"/>
    <property type="RefSeq nucleotide sequence ID" value="NM_004614.5"/>
    <property type="RefSeq protein sequence ID" value="NP_004605.4"/>
</dbReference>
<dbReference type="UCSC" id="uc002eor.4">
    <molecule id="O00142-1"/>
    <property type="organism name" value="human"/>
</dbReference>
<dbReference type="UCSC" id="uc059vic.1">
    <property type="organism name" value="human"/>
</dbReference>
<dbReference type="AGR" id="HGNC:11831"/>
<dbReference type="CTD" id="7084"/>
<dbReference type="DisGeNET" id="7084"/>
<dbReference type="GeneCards" id="TK2"/>
<dbReference type="GeneReviews" id="TK2"/>
<dbReference type="HGNC" id="HGNC:11831">
    <property type="gene designation" value="TK2"/>
</dbReference>
<dbReference type="HPA" id="ENSG00000166548">
    <property type="expression patterns" value="Low tissue specificity"/>
</dbReference>
<dbReference type="MalaCards" id="TK2"/>
<dbReference type="MIM" id="188250">
    <property type="type" value="gene"/>
</dbReference>
<dbReference type="MIM" id="609560">
    <property type="type" value="phenotype"/>
</dbReference>
<dbReference type="MIM" id="617069">
    <property type="type" value="phenotype"/>
</dbReference>
<dbReference type="neXtProt" id="NX_O00142"/>
<dbReference type="OpenTargets" id="ENSG00000166548"/>
<dbReference type="Orphanet" id="254886">
    <property type="disease" value="Autosomal recessive progressive external ophthalmoplegia"/>
</dbReference>
<dbReference type="Orphanet" id="254875">
    <property type="disease" value="Mitochondrial DNA depletion syndrome, myopathic form"/>
</dbReference>
<dbReference type="PharmGKB" id="PA36535"/>
<dbReference type="VEuPathDB" id="HostDB:ENSG00000166548"/>
<dbReference type="eggNOG" id="KOG4235">
    <property type="taxonomic scope" value="Eukaryota"/>
</dbReference>
<dbReference type="GeneTree" id="ENSGT00940000158005"/>
<dbReference type="HOGENOM" id="CLU_030466_1_0_1"/>
<dbReference type="InParanoid" id="O00142"/>
<dbReference type="OMA" id="CVQDRTL"/>
<dbReference type="OrthoDB" id="567086at2759"/>
<dbReference type="PAN-GO" id="O00142">
    <property type="GO annotations" value="2 GO annotations based on evolutionary models"/>
</dbReference>
<dbReference type="PhylomeDB" id="O00142"/>
<dbReference type="TreeFam" id="TF324413"/>
<dbReference type="BioCyc" id="MetaCyc:HS09420-MONOMER"/>
<dbReference type="BRENDA" id="2.7.1.21">
    <property type="organism ID" value="2681"/>
</dbReference>
<dbReference type="PathwayCommons" id="O00142"/>
<dbReference type="Reactome" id="R-HSA-73614">
    <property type="pathway name" value="Pyrimidine salvage"/>
</dbReference>
<dbReference type="SABIO-RK" id="O00142"/>
<dbReference type="SignaLink" id="O00142"/>
<dbReference type="BioGRID-ORCS" id="7084">
    <property type="hits" value="12 hits in 1165 CRISPR screens"/>
</dbReference>
<dbReference type="ChiTaRS" id="TK2">
    <property type="organism name" value="human"/>
</dbReference>
<dbReference type="GenomeRNAi" id="7084"/>
<dbReference type="Pharos" id="O00142">
    <property type="development level" value="Tchem"/>
</dbReference>
<dbReference type="PRO" id="PR:O00142"/>
<dbReference type="Proteomes" id="UP000005640">
    <property type="component" value="Chromosome 16"/>
</dbReference>
<dbReference type="RNAct" id="O00142">
    <property type="molecule type" value="protein"/>
</dbReference>
<dbReference type="Bgee" id="ENSG00000166548">
    <property type="expression patterns" value="Expressed in calcaneal tendon and 198 other cell types or tissues"/>
</dbReference>
<dbReference type="ExpressionAtlas" id="O00142">
    <property type="expression patterns" value="baseline and differential"/>
</dbReference>
<dbReference type="GO" id="GO:0005737">
    <property type="term" value="C:cytoplasm"/>
    <property type="evidence" value="ECO:0000318"/>
    <property type="project" value="GO_Central"/>
</dbReference>
<dbReference type="GO" id="GO:0005759">
    <property type="term" value="C:mitochondrial matrix"/>
    <property type="evidence" value="ECO:0000304"/>
    <property type="project" value="Reactome"/>
</dbReference>
<dbReference type="GO" id="GO:0005739">
    <property type="term" value="C:mitochondrion"/>
    <property type="evidence" value="ECO:0000314"/>
    <property type="project" value="UniProtKB"/>
</dbReference>
<dbReference type="GO" id="GO:0005524">
    <property type="term" value="F:ATP binding"/>
    <property type="evidence" value="ECO:0007669"/>
    <property type="project" value="UniProtKB-KW"/>
</dbReference>
<dbReference type="GO" id="GO:0004137">
    <property type="term" value="F:deoxycytidine kinase activity"/>
    <property type="evidence" value="ECO:0000314"/>
    <property type="project" value="UniProtKB"/>
</dbReference>
<dbReference type="GO" id="GO:0019136">
    <property type="term" value="F:deoxynucleoside kinase activity"/>
    <property type="evidence" value="ECO:0000318"/>
    <property type="project" value="GO_Central"/>
</dbReference>
<dbReference type="GO" id="GO:0019206">
    <property type="term" value="F:nucleoside kinase activity"/>
    <property type="evidence" value="ECO:0000304"/>
    <property type="project" value="Reactome"/>
</dbReference>
<dbReference type="GO" id="GO:0004797">
    <property type="term" value="F:thymidine kinase activity"/>
    <property type="evidence" value="ECO:0000314"/>
    <property type="project" value="UniProtKB"/>
</dbReference>
<dbReference type="GO" id="GO:0046092">
    <property type="term" value="P:deoxycytidine metabolic process"/>
    <property type="evidence" value="ECO:0007669"/>
    <property type="project" value="Ensembl"/>
</dbReference>
<dbReference type="GO" id="GO:0071897">
    <property type="term" value="P:DNA biosynthetic process"/>
    <property type="evidence" value="ECO:0007669"/>
    <property type="project" value="UniProtKB-KW"/>
</dbReference>
<dbReference type="GO" id="GO:0006139">
    <property type="term" value="P:nucleobase-containing compound metabolic process"/>
    <property type="evidence" value="ECO:0000304"/>
    <property type="project" value="ProtInc"/>
</dbReference>
<dbReference type="GO" id="GO:0043097">
    <property type="term" value="P:pyrimidine nucleoside salvage"/>
    <property type="evidence" value="ECO:0000304"/>
    <property type="project" value="Reactome"/>
</dbReference>
<dbReference type="GO" id="GO:0046104">
    <property type="term" value="P:thymidine metabolic process"/>
    <property type="evidence" value="ECO:0007669"/>
    <property type="project" value="Ensembl"/>
</dbReference>
<dbReference type="CDD" id="cd01673">
    <property type="entry name" value="dNK"/>
    <property type="match status" value="1"/>
</dbReference>
<dbReference type="FunFam" id="3.40.50.300:FF:000998">
    <property type="entry name" value="Thymidine kinase 2, mitochondrial"/>
    <property type="match status" value="1"/>
</dbReference>
<dbReference type="Gene3D" id="3.40.50.300">
    <property type="entry name" value="P-loop containing nucleotide triphosphate hydrolases"/>
    <property type="match status" value="1"/>
</dbReference>
<dbReference type="InterPro" id="IPR002624">
    <property type="entry name" value="DCK/DGK"/>
</dbReference>
<dbReference type="InterPro" id="IPR050566">
    <property type="entry name" value="Deoxyribonucleoside_kinase"/>
</dbReference>
<dbReference type="InterPro" id="IPR031314">
    <property type="entry name" value="DNK_dom"/>
</dbReference>
<dbReference type="InterPro" id="IPR027417">
    <property type="entry name" value="P-loop_NTPase"/>
</dbReference>
<dbReference type="PANTHER" id="PTHR10513">
    <property type="entry name" value="DEOXYNUCLEOSIDE KINASE"/>
    <property type="match status" value="1"/>
</dbReference>
<dbReference type="PANTHER" id="PTHR10513:SF24">
    <property type="entry name" value="THYMIDINE KINASE 2, MITOCHONDRIAL"/>
    <property type="match status" value="1"/>
</dbReference>
<dbReference type="Pfam" id="PF01712">
    <property type="entry name" value="dNK"/>
    <property type="match status" value="1"/>
</dbReference>
<dbReference type="PIRSF" id="PIRSF000705">
    <property type="entry name" value="DNK"/>
    <property type="match status" value="1"/>
</dbReference>
<dbReference type="SUPFAM" id="SSF52540">
    <property type="entry name" value="P-loop containing nucleoside triphosphate hydrolases"/>
    <property type="match status" value="1"/>
</dbReference>
<protein>
    <recommendedName>
        <fullName evidence="16">Thymidine kinase 2, mitochondrial</fullName>
        <ecNumber evidence="3 11">2.7.1.21</ecNumber>
    </recommendedName>
    <alternativeName>
        <fullName evidence="16">2'-deoxyuridine kinase TK2</fullName>
        <ecNumber evidence="17">2.7.1.74</ecNumber>
    </alternativeName>
    <alternativeName>
        <fullName evidence="16">Deoxycytidine kinase TK2</fullName>
        <ecNumber evidence="3 17">2.7.1.-</ecNumber>
    </alternativeName>
    <alternativeName>
        <fullName>Mt-TK</fullName>
    </alternativeName>
</protein>
<name>KITM_HUMAN</name>
<feature type="transit peptide" description="Mitochondrion" evidence="11">
    <location>
        <begin position="1"/>
        <end position="33"/>
    </location>
</feature>
<feature type="chain" id="PRO_0000016842" description="Thymidine kinase 2, mitochondrial">
    <location>
        <begin position="34"/>
        <end position="265"/>
    </location>
</feature>
<feature type="region of interest" description="Disordered" evidence="2">
    <location>
        <begin position="20"/>
        <end position="47"/>
    </location>
</feature>
<feature type="compositionally biased region" description="Low complexity" evidence="2">
    <location>
        <begin position="20"/>
        <end position="32"/>
    </location>
</feature>
<feature type="active site" description="Proton acceptor" evidence="1">
    <location>
        <position position="133"/>
    </location>
</feature>
<feature type="binding site" evidence="1">
    <location>
        <begin position="57"/>
        <end position="65"/>
    </location>
    <ligand>
        <name>ATP</name>
        <dbReference type="ChEBI" id="CHEBI:30616"/>
    </ligand>
</feature>
<feature type="splice variant" id="VSP_054606" description="In isoform 5." evidence="12">
    <location>
        <begin position="1"/>
        <end position="97"/>
    </location>
</feature>
<feature type="splice variant" id="VSP_003028" description="In isoform 2." evidence="14">
    <original>MLLWPLRGWAARALRCFGPGSRGSPASGPGPRRVQRRAWPP</original>
    <variation>MGAFCQRPSS</variation>
    <location>
        <begin position="1"/>
        <end position="41"/>
    </location>
</feature>
<feature type="splice variant" id="VSP_058694" description="In isoform 6." evidence="13">
    <original>M</original>
    <variation>MRPGLFKGQAPGSRRRPTAGLAVVRADSHKKEPRASGSARPAM</variation>
    <location>
        <position position="1"/>
    </location>
</feature>
<feature type="splice variant" id="VSP_043503" description="In isoform 3." evidence="12">
    <location>
        <begin position="53"/>
        <end position="77"/>
    </location>
</feature>
<feature type="splice variant" id="VSP_044459" description="In isoform 4." evidence="12">
    <location>
        <begin position="78"/>
        <end position="95"/>
    </location>
</feature>
<feature type="sequence variant" id="VAR_019419" description="In MTDPS2; dbSNP:rs137854432." evidence="4">
    <original>I</original>
    <variation>M</variation>
    <location>
        <position position="53"/>
    </location>
</feature>
<feature type="sequence variant" id="VAR_023790" description="In MTDPS2; dbSNP:rs281865487." evidence="6">
    <original>T</original>
    <variation>M</variation>
    <location>
        <position position="64"/>
    </location>
</feature>
<feature type="sequence variant" id="VAR_019420" description="In MTDPS2; reduction of activity; dbSNP:rs137854431." evidence="4 5">
    <original>T</original>
    <variation>M</variation>
    <location>
        <position position="108"/>
    </location>
</feature>
<feature type="sequence variant" id="VAR_072789" description="In MTDPS2; severe form of combined brain and muscular atrophy; depletion of mtDNA in skeletal muscle; normal residual mtDNA in blood and fibroblasts." evidence="9">
    <original>M</original>
    <variation>V</variation>
    <location>
        <position position="117"/>
    </location>
</feature>
<feature type="sequence variant" id="VAR_019421" description="In MTDPS2; reduction of activity in muscles; dbSNP:rs137854429." evidence="3 4">
    <original>H</original>
    <variation>N</variation>
    <location>
        <position position="121"/>
    </location>
</feature>
<feature type="sequence variant" id="VAR_072790" description="In MTDPS2; severe form of combined brain and muscular atrophy; depletion of mtDNA in skeletal muscle; normal residual mtDNA in blood and fibroblasts; dbSNP:rs281865494." evidence="9">
    <original>A</original>
    <variation>V</variation>
    <location>
        <position position="139"/>
    </location>
</feature>
<feature type="sequence variant" id="VAR_023791" description="In MTDPS2 and PEOB3; reduction of activity; reduced affinity for ATP; dbSNP:rs137886900." evidence="6 8">
    <original>R</original>
    <variation>W</variation>
    <location>
        <position position="183"/>
    </location>
</feature>
<feature type="sequence variant" id="VAR_076984" description="In PEOB3; reduction of activity; reduced affinity for ATP; dbSNP:rs281865495." evidence="8">
    <original>T</original>
    <variation>A</variation>
    <location>
        <position position="188"/>
    </location>
</feature>
<feature type="sequence variant" id="VAR_023792" description="In MTDPS2; reduction of activity; dbSNP:rs281865496." evidence="5">
    <original>R</original>
    <variation>K</variation>
    <location>
        <position position="192"/>
    </location>
</feature>
<feature type="sequence variant" id="VAR_019422" description="In MTDPS2; reduction of activity in muscles; dbSNP:rs137854430." evidence="3">
    <original>I</original>
    <variation>N</variation>
    <location>
        <position position="212"/>
    </location>
</feature>
<feature type="sequence conflict" description="In Ref. 2; AA sequence." evidence="16" ref="2">
    <original>R</original>
    <variation>Y</variation>
    <location>
        <position position="37"/>
    </location>
</feature>
<feature type="sequence conflict" description="In Ref. 5; BAG57808." evidence="16" ref="5">
    <original>K</original>
    <variation>E</variation>
    <location>
        <position position="49"/>
    </location>
</feature>
<feature type="sequence conflict" description="In Ref. 1; AAC51167." evidence="16" ref="1">
    <original>S</original>
    <variation>G</variation>
    <location>
        <position position="61"/>
    </location>
</feature>
<feature type="sequence conflict" description="In Ref. 5; BAG57808." evidence="16" ref="5">
    <original>L</original>
    <variation>P</variation>
    <location>
        <position position="206"/>
    </location>
</feature>
<feature type="sequence conflict" description="In Ref. 2; CAA71523." evidence="16" ref="2">
    <original>D</original>
    <variation>DH</variation>
    <location>
        <position position="238"/>
    </location>
</feature>
<feature type="sequence conflict" description="In Ref. 1; AAC51167." evidence="16" ref="1">
    <location>
        <position position="241"/>
    </location>
</feature>
<feature type="sequence conflict" description="In Ref. 5; BAG57808." evidence="16" ref="5">
    <original>N</original>
    <variation>S</variation>
    <location>
        <position position="251"/>
    </location>
</feature>
<comment type="function">
    <text evidence="3 11">Phosphorylates thymidine, deoxycytidine, and deoxyuridine in the mitochondrial matrix (PubMed:11687801, PubMed:9989599). In non-replicating cells, where cytosolic dNTP synthesis is down-regulated, mtDNA synthesis depends solely on TK2 and DGUOK (PubMed:9989599). Widely used as target of antiviral and chemotherapeutic agents (PubMed:9989599).</text>
</comment>
<comment type="catalytic activity">
    <reaction evidence="3 11">
        <text>thymidine + ATP = dTMP + ADP + H(+)</text>
        <dbReference type="Rhea" id="RHEA:19129"/>
        <dbReference type="ChEBI" id="CHEBI:15378"/>
        <dbReference type="ChEBI" id="CHEBI:17748"/>
        <dbReference type="ChEBI" id="CHEBI:30616"/>
        <dbReference type="ChEBI" id="CHEBI:63528"/>
        <dbReference type="ChEBI" id="CHEBI:456216"/>
        <dbReference type="EC" id="2.7.1.21"/>
    </reaction>
    <physiologicalReaction direction="left-to-right" evidence="3 11">
        <dbReference type="Rhea" id="RHEA:19130"/>
    </physiologicalReaction>
</comment>
<comment type="catalytic activity">
    <reaction evidence="3 17">
        <text>2'-deoxycytidine + ATP = dCMP + ADP + H(+)</text>
        <dbReference type="Rhea" id="RHEA:46040"/>
        <dbReference type="ChEBI" id="CHEBI:15378"/>
        <dbReference type="ChEBI" id="CHEBI:15698"/>
        <dbReference type="ChEBI" id="CHEBI:30616"/>
        <dbReference type="ChEBI" id="CHEBI:57566"/>
        <dbReference type="ChEBI" id="CHEBI:456216"/>
        <dbReference type="EC" id="2.7.1.74"/>
    </reaction>
    <physiologicalReaction direction="left-to-right" evidence="3 17">
        <dbReference type="Rhea" id="RHEA:46041"/>
    </physiologicalReaction>
</comment>
<comment type="catalytic activity">
    <reaction evidence="17">
        <text>2'-deoxyuridine + ATP = dUMP + ADP + H(+)</text>
        <dbReference type="Rhea" id="RHEA:28206"/>
        <dbReference type="ChEBI" id="CHEBI:15378"/>
        <dbReference type="ChEBI" id="CHEBI:16450"/>
        <dbReference type="ChEBI" id="CHEBI:30616"/>
        <dbReference type="ChEBI" id="CHEBI:246422"/>
        <dbReference type="ChEBI" id="CHEBI:456216"/>
    </reaction>
    <physiologicalReaction direction="left-to-right" evidence="17">
        <dbReference type="Rhea" id="RHEA:28207"/>
    </physiologicalReaction>
</comment>
<comment type="biophysicochemical properties">
    <kinetics>
        <KM evidence="11">16 uM for thymidine</KM>
        <KM evidence="11">36 uM for 2'-deoxycytidine</KM>
    </kinetics>
</comment>
<comment type="subunit">
    <text evidence="7 8">Monomer.</text>
</comment>
<comment type="subcellular location">
    <subcellularLocation>
        <location evidence="11">Mitochondrion</location>
    </subcellularLocation>
</comment>
<comment type="alternative products">
    <event type="alternative splicing"/>
    <isoform>
        <id>O00142-1</id>
        <name>1</name>
        <sequence type="displayed"/>
    </isoform>
    <isoform>
        <id>O00142-2</id>
        <name>2</name>
        <sequence type="described" ref="VSP_003028"/>
    </isoform>
    <isoform>
        <id>O00142-3</id>
        <name>3</name>
        <sequence type="described" ref="VSP_043503"/>
    </isoform>
    <isoform>
        <id>O00142-4</id>
        <name>4</name>
        <sequence type="described" ref="VSP_044459"/>
    </isoform>
    <isoform>
        <id>O00142-5</id>
        <name>5</name>
        <sequence type="described" ref="VSP_054606"/>
    </isoform>
    <isoform>
        <id>O00142-6</id>
        <name>6</name>
        <sequence type="described" ref="VSP_058694"/>
    </isoform>
</comment>
<comment type="tissue specificity">
    <text evidence="10">Predominantly expressed in liver, pancreas, muscle, and brain.</text>
</comment>
<comment type="disease" evidence="3 4 5 6 9">
    <disease id="DI-02018">
        <name>Mitochondrial DNA depletion syndrome 2</name>
        <acronym>MTDPS2</acronym>
        <description>A disorder due to mitochondrial dysfunction characterized by childhood onset of muscle weakness associated with depletion of mtDNA in skeletal muscle. There is wide clinical variability; some patients have onset in infancy and show a rapidly progressive course with early death due to respiratory failure, whereas others have later onset of a slowly progressive myopathy.</description>
        <dbReference type="MIM" id="609560"/>
    </disease>
    <text>The disease is caused by variants affecting the gene represented in this entry.</text>
</comment>
<comment type="disease" evidence="8">
    <disease id="DI-04801">
        <name>Progressive external ophthalmoplegia with mitochondrial DNA deletions, autosomal recessive 3</name>
        <acronym>PEOB3</acronym>
        <description>A form of progressive external ophthalmoplegia, a mitochondrial myopathy characterized by progressive paralysis of the levator palpebrae, orbicularis oculi, and extraocular muscles. PEOB3 patients manifest adult-onset progressive external ophthalmoplegia and progressive proximal muscle weakness associated with muscle atrophy.</description>
        <dbReference type="MIM" id="617069"/>
    </disease>
    <text>The disease is caused by variants affecting the gene represented in this entry.</text>
</comment>
<comment type="similarity">
    <text>Belongs to the DCK/DGK family.</text>
</comment>
<organism>
    <name type="scientific">Homo sapiens</name>
    <name type="common">Human</name>
    <dbReference type="NCBI Taxonomy" id="9606"/>
    <lineage>
        <taxon>Eukaryota</taxon>
        <taxon>Metazoa</taxon>
        <taxon>Chordata</taxon>
        <taxon>Craniata</taxon>
        <taxon>Vertebrata</taxon>
        <taxon>Euteleostomi</taxon>
        <taxon>Mammalia</taxon>
        <taxon>Eutheria</taxon>
        <taxon>Euarchontoglires</taxon>
        <taxon>Primates</taxon>
        <taxon>Haplorrhini</taxon>
        <taxon>Catarrhini</taxon>
        <taxon>Hominidae</taxon>
        <taxon>Homo</taxon>
    </lineage>
</organism>
<sequence length="265" mass="31005">MLLWPLRGWAARALRCFGPGSRGSPASGPGPRRVQRRAWPPDKEQEKEKKSVICVEGNIASGKTTCLEFFSNATDVEVLTEPVSKWRNVRGHNPLGLMYHDASRWGLTLQTYVQLTMLDRHTRPQVSSVRLMERSIHSARYIFVENLYRSGKMPEVDYVVLSEWFDWILRNMDVSVDLIVYLRTNPETCYQRLKKRCREEEKVIPLEYLEAIHHLHEEWLIKGSLFPMAAPVLVIEADHHMERMLELFEQNRDRILTPENRKHCP</sequence>
<evidence type="ECO:0000250" key="1">
    <source>
        <dbReference type="UniProtKB" id="O57203"/>
    </source>
</evidence>
<evidence type="ECO:0000256" key="2">
    <source>
        <dbReference type="SAM" id="MobiDB-lite"/>
    </source>
</evidence>
<evidence type="ECO:0000269" key="3">
    <source>
    </source>
</evidence>
<evidence type="ECO:0000269" key="4">
    <source>
    </source>
</evidence>
<evidence type="ECO:0000269" key="5">
    <source>
    </source>
</evidence>
<evidence type="ECO:0000269" key="6">
    <source>
    </source>
</evidence>
<evidence type="ECO:0000269" key="7">
    <source>
    </source>
</evidence>
<evidence type="ECO:0000269" key="8">
    <source>
    </source>
</evidence>
<evidence type="ECO:0000269" key="9">
    <source>
    </source>
</evidence>
<evidence type="ECO:0000269" key="10">
    <source>
    </source>
</evidence>
<evidence type="ECO:0000269" key="11">
    <source>
    </source>
</evidence>
<evidence type="ECO:0000303" key="12">
    <source>
    </source>
</evidence>
<evidence type="ECO:0000303" key="13">
    <source>
    </source>
</evidence>
<evidence type="ECO:0000303" key="14">
    <source>
    </source>
</evidence>
<evidence type="ECO:0000303" key="15">
    <source>
    </source>
</evidence>
<evidence type="ECO:0000305" key="16"/>
<evidence type="ECO:0000305" key="17">
    <source>
    </source>
</evidence>
<evidence type="ECO:0000312" key="18">
    <source>
        <dbReference type="HGNC" id="HGNC:11831"/>
    </source>
</evidence>
<proteinExistence type="evidence at protein level"/>
<reference key="1">
    <citation type="journal article" date="1997" name="J. Biol. Chem.">
        <title>Cloning of the cDNA and chromosome localization of the gene for human thymidine kinase 2.</title>
        <authorList>
            <person name="Johansson M."/>
            <person name="Karlsson A."/>
        </authorList>
    </citation>
    <scope>NUCLEOTIDE SEQUENCE [MRNA] (ISOFORM 2)</scope>
    <scope>TISSUE SPECIFICITY</scope>
    <source>
        <tissue>Liver</tissue>
    </source>
</reference>
<reference key="2">
    <citation type="journal article" date="1999" name="FEBS Lett.">
        <title>Human thymidine kinase 2: molecular cloning and characterisation of the enzyme activity with antiviral and cytostatic nucleoside substrates.</title>
        <authorList>
            <person name="Wang L."/>
            <person name="Munch-Petersen B."/>
            <person name="Herrstroem Sjoeberg A."/>
            <person name="Hellman U."/>
            <person name="Bergman T."/>
            <person name="Joernvall H."/>
            <person name="Eriksson S."/>
        </authorList>
    </citation>
    <scope>NUCLEOTIDE SEQUENCE [MRNA] (ISOFORM 1)</scope>
    <scope>PROTEIN SEQUENCE OF 34-61 (ISOFORM 1)</scope>
    <scope>FUNCTION</scope>
    <scope>CATALYTIC ACTIVITY</scope>
    <scope>BIOPHYSICOCHEMICAL PROPERTIES</scope>
    <scope>SUBCELLULAR LOCATION</scope>
    <source>
        <tissue>Brain</tissue>
    </source>
</reference>
<reference key="3">
    <citation type="journal article" date="2011" name="Nucleic Acids Res.">
        <title>Identification of rare DNA variants in mitochondrial disorders with improved array-based sequencing.</title>
        <authorList>
            <person name="Wang W."/>
            <person name="Shen P."/>
            <person name="Thiyagarajan S."/>
            <person name="Lin S."/>
            <person name="Palm C."/>
            <person name="Horvath R."/>
            <person name="Klopstock T."/>
            <person name="Cutler D."/>
            <person name="Pique L."/>
            <person name="Schrijver I."/>
            <person name="Davis R.W."/>
            <person name="Mindrinos M."/>
            <person name="Speed T.P."/>
            <person name="Scharfe C."/>
        </authorList>
    </citation>
    <scope>NUCLEOTIDE SEQUENCE [GENOMIC DNA] (ISOFORM 6)</scope>
    <scope>SUBUNIT</scope>
</reference>
<reference key="4">
    <citation type="submission" date="2002-09" db="EMBL/GenBank/DDBJ databases">
        <authorList>
            <person name="Wang L."/>
        </authorList>
    </citation>
    <scope>SEQUENCE REVISION</scope>
</reference>
<reference key="5">
    <citation type="journal article" date="2004" name="Nat. Genet.">
        <title>Complete sequencing and characterization of 21,243 full-length human cDNAs.</title>
        <authorList>
            <person name="Ota T."/>
            <person name="Suzuki Y."/>
            <person name="Nishikawa T."/>
            <person name="Otsuki T."/>
            <person name="Sugiyama T."/>
            <person name="Irie R."/>
            <person name="Wakamatsu A."/>
            <person name="Hayashi K."/>
            <person name="Sato H."/>
            <person name="Nagai K."/>
            <person name="Kimura K."/>
            <person name="Makita H."/>
            <person name="Sekine M."/>
            <person name="Obayashi M."/>
            <person name="Nishi T."/>
            <person name="Shibahara T."/>
            <person name="Tanaka T."/>
            <person name="Ishii S."/>
            <person name="Yamamoto J."/>
            <person name="Saito K."/>
            <person name="Kawai Y."/>
            <person name="Isono Y."/>
            <person name="Nakamura Y."/>
            <person name="Nagahari K."/>
            <person name="Murakami K."/>
            <person name="Yasuda T."/>
            <person name="Iwayanagi T."/>
            <person name="Wagatsuma M."/>
            <person name="Shiratori A."/>
            <person name="Sudo H."/>
            <person name="Hosoiri T."/>
            <person name="Kaku Y."/>
            <person name="Kodaira H."/>
            <person name="Kondo H."/>
            <person name="Sugawara M."/>
            <person name="Takahashi M."/>
            <person name="Kanda K."/>
            <person name="Yokoi T."/>
            <person name="Furuya T."/>
            <person name="Kikkawa E."/>
            <person name="Omura Y."/>
            <person name="Abe K."/>
            <person name="Kamihara K."/>
            <person name="Katsuta N."/>
            <person name="Sato K."/>
            <person name="Tanikawa M."/>
            <person name="Yamazaki M."/>
            <person name="Ninomiya K."/>
            <person name="Ishibashi T."/>
            <person name="Yamashita H."/>
            <person name="Murakawa K."/>
            <person name="Fujimori K."/>
            <person name="Tanai H."/>
            <person name="Kimata M."/>
            <person name="Watanabe M."/>
            <person name="Hiraoka S."/>
            <person name="Chiba Y."/>
            <person name="Ishida S."/>
            <person name="Ono Y."/>
            <person name="Takiguchi S."/>
            <person name="Watanabe S."/>
            <person name="Yosida M."/>
            <person name="Hotuta T."/>
            <person name="Kusano J."/>
            <person name="Kanehori K."/>
            <person name="Takahashi-Fujii A."/>
            <person name="Hara H."/>
            <person name="Tanase T.-O."/>
            <person name="Nomura Y."/>
            <person name="Togiya S."/>
            <person name="Komai F."/>
            <person name="Hara R."/>
            <person name="Takeuchi K."/>
            <person name="Arita M."/>
            <person name="Imose N."/>
            <person name="Musashino K."/>
            <person name="Yuuki H."/>
            <person name="Oshima A."/>
            <person name="Sasaki N."/>
            <person name="Aotsuka S."/>
            <person name="Yoshikawa Y."/>
            <person name="Matsunawa H."/>
            <person name="Ichihara T."/>
            <person name="Shiohata N."/>
            <person name="Sano S."/>
            <person name="Moriya S."/>
            <person name="Momiyama H."/>
            <person name="Satoh N."/>
            <person name="Takami S."/>
            <person name="Terashima Y."/>
            <person name="Suzuki O."/>
            <person name="Nakagawa S."/>
            <person name="Senoh A."/>
            <person name="Mizoguchi H."/>
            <person name="Goto Y."/>
            <person name="Shimizu F."/>
            <person name="Wakebe H."/>
            <person name="Hishigaki H."/>
            <person name="Watanabe T."/>
            <person name="Sugiyama A."/>
            <person name="Takemoto M."/>
            <person name="Kawakami B."/>
            <person name="Yamazaki M."/>
            <person name="Watanabe K."/>
            <person name="Kumagai A."/>
            <person name="Itakura S."/>
            <person name="Fukuzumi Y."/>
            <person name="Fujimori Y."/>
            <person name="Komiyama M."/>
            <person name="Tashiro H."/>
            <person name="Tanigami A."/>
            <person name="Fujiwara T."/>
            <person name="Ono T."/>
            <person name="Yamada K."/>
            <person name="Fujii Y."/>
            <person name="Ozaki K."/>
            <person name="Hirao M."/>
            <person name="Ohmori Y."/>
            <person name="Kawabata A."/>
            <person name="Hikiji T."/>
            <person name="Kobatake N."/>
            <person name="Inagaki H."/>
            <person name="Ikema Y."/>
            <person name="Okamoto S."/>
            <person name="Okitani R."/>
            <person name="Kawakami T."/>
            <person name="Noguchi S."/>
            <person name="Itoh T."/>
            <person name="Shigeta K."/>
            <person name="Senba T."/>
            <person name="Matsumura K."/>
            <person name="Nakajima Y."/>
            <person name="Mizuno T."/>
            <person name="Morinaga M."/>
            <person name="Sasaki M."/>
            <person name="Togashi T."/>
            <person name="Oyama M."/>
            <person name="Hata H."/>
            <person name="Watanabe M."/>
            <person name="Komatsu T."/>
            <person name="Mizushima-Sugano J."/>
            <person name="Satoh T."/>
            <person name="Shirai Y."/>
            <person name="Takahashi Y."/>
            <person name="Nakagawa K."/>
            <person name="Okumura K."/>
            <person name="Nagase T."/>
            <person name="Nomura N."/>
            <person name="Kikuchi H."/>
            <person name="Masuho Y."/>
            <person name="Yamashita R."/>
            <person name="Nakai K."/>
            <person name="Yada T."/>
            <person name="Nakamura Y."/>
            <person name="Ohara O."/>
            <person name="Isogai T."/>
            <person name="Sugano S."/>
        </authorList>
    </citation>
    <scope>NUCLEOTIDE SEQUENCE [LARGE SCALE MRNA] (ISOFORMS 3; 4 AND 5)</scope>
    <source>
        <tissue>Brain</tissue>
        <tissue>Testis</tissue>
    </source>
</reference>
<reference key="6">
    <citation type="journal article" date="2004" name="Nature">
        <title>The sequence and analysis of duplication-rich human chromosome 16.</title>
        <authorList>
            <person name="Martin J."/>
            <person name="Han C."/>
            <person name="Gordon L.A."/>
            <person name="Terry A."/>
            <person name="Prabhakar S."/>
            <person name="She X."/>
            <person name="Xie G."/>
            <person name="Hellsten U."/>
            <person name="Chan Y.M."/>
            <person name="Altherr M."/>
            <person name="Couronne O."/>
            <person name="Aerts A."/>
            <person name="Bajorek E."/>
            <person name="Black S."/>
            <person name="Blumer H."/>
            <person name="Branscomb E."/>
            <person name="Brown N.C."/>
            <person name="Bruno W.J."/>
            <person name="Buckingham J.M."/>
            <person name="Callen D.F."/>
            <person name="Campbell C.S."/>
            <person name="Campbell M.L."/>
            <person name="Campbell E.W."/>
            <person name="Caoile C."/>
            <person name="Challacombe J.F."/>
            <person name="Chasteen L.A."/>
            <person name="Chertkov O."/>
            <person name="Chi H.C."/>
            <person name="Christensen M."/>
            <person name="Clark L.M."/>
            <person name="Cohn J.D."/>
            <person name="Denys M."/>
            <person name="Detter J.C."/>
            <person name="Dickson M."/>
            <person name="Dimitrijevic-Bussod M."/>
            <person name="Escobar J."/>
            <person name="Fawcett J.J."/>
            <person name="Flowers D."/>
            <person name="Fotopulos D."/>
            <person name="Glavina T."/>
            <person name="Gomez M."/>
            <person name="Gonzales E."/>
            <person name="Goodstein D."/>
            <person name="Goodwin L.A."/>
            <person name="Grady D.L."/>
            <person name="Grigoriev I."/>
            <person name="Groza M."/>
            <person name="Hammon N."/>
            <person name="Hawkins T."/>
            <person name="Haydu L."/>
            <person name="Hildebrand C.E."/>
            <person name="Huang W."/>
            <person name="Israni S."/>
            <person name="Jett J."/>
            <person name="Jewett P.B."/>
            <person name="Kadner K."/>
            <person name="Kimball H."/>
            <person name="Kobayashi A."/>
            <person name="Krawczyk M.-C."/>
            <person name="Leyba T."/>
            <person name="Longmire J.L."/>
            <person name="Lopez F."/>
            <person name="Lou Y."/>
            <person name="Lowry S."/>
            <person name="Ludeman T."/>
            <person name="Manohar C.F."/>
            <person name="Mark G.A."/>
            <person name="McMurray K.L."/>
            <person name="Meincke L.J."/>
            <person name="Morgan J."/>
            <person name="Moyzis R.K."/>
            <person name="Mundt M.O."/>
            <person name="Munk A.C."/>
            <person name="Nandkeshwar R.D."/>
            <person name="Pitluck S."/>
            <person name="Pollard M."/>
            <person name="Predki P."/>
            <person name="Parson-Quintana B."/>
            <person name="Ramirez L."/>
            <person name="Rash S."/>
            <person name="Retterer J."/>
            <person name="Ricke D.O."/>
            <person name="Robinson D.L."/>
            <person name="Rodriguez A."/>
            <person name="Salamov A."/>
            <person name="Saunders E.H."/>
            <person name="Scott D."/>
            <person name="Shough T."/>
            <person name="Stallings R.L."/>
            <person name="Stalvey M."/>
            <person name="Sutherland R.D."/>
            <person name="Tapia R."/>
            <person name="Tesmer J.G."/>
            <person name="Thayer N."/>
            <person name="Thompson L.S."/>
            <person name="Tice H."/>
            <person name="Torney D.C."/>
            <person name="Tran-Gyamfi M."/>
            <person name="Tsai M."/>
            <person name="Ulanovsky L.E."/>
            <person name="Ustaszewska A."/>
            <person name="Vo N."/>
            <person name="White P.S."/>
            <person name="Williams A.L."/>
            <person name="Wills P.L."/>
            <person name="Wu J.-R."/>
            <person name="Wu K."/>
            <person name="Yang J."/>
            <person name="DeJong P."/>
            <person name="Bruce D."/>
            <person name="Doggett N.A."/>
            <person name="Deaven L."/>
            <person name="Schmutz J."/>
            <person name="Grimwood J."/>
            <person name="Richardson P."/>
            <person name="Rokhsar D.S."/>
            <person name="Eichler E.E."/>
            <person name="Gilna P."/>
            <person name="Lucas S.M."/>
            <person name="Myers R.M."/>
            <person name="Rubin E.M."/>
            <person name="Pennacchio L.A."/>
        </authorList>
    </citation>
    <scope>NUCLEOTIDE SEQUENCE [LARGE SCALE GENOMIC DNA]</scope>
</reference>
<reference key="7">
    <citation type="submission" date="2005-07" db="EMBL/GenBank/DDBJ databases">
        <authorList>
            <person name="Mural R.J."/>
            <person name="Istrail S."/>
            <person name="Sutton G."/>
            <person name="Florea L."/>
            <person name="Halpern A.L."/>
            <person name="Mobarry C.M."/>
            <person name="Lippert R."/>
            <person name="Walenz B."/>
            <person name="Shatkay H."/>
            <person name="Dew I."/>
            <person name="Miller J.R."/>
            <person name="Flanigan M.J."/>
            <person name="Edwards N.J."/>
            <person name="Bolanos R."/>
            <person name="Fasulo D."/>
            <person name="Halldorsson B.V."/>
            <person name="Hannenhalli S."/>
            <person name="Turner R."/>
            <person name="Yooseph S."/>
            <person name="Lu F."/>
            <person name="Nusskern D.R."/>
            <person name="Shue B.C."/>
            <person name="Zheng X.H."/>
            <person name="Zhong F."/>
            <person name="Delcher A.L."/>
            <person name="Huson D.H."/>
            <person name="Kravitz S.A."/>
            <person name="Mouchard L."/>
            <person name="Reinert K."/>
            <person name="Remington K.A."/>
            <person name="Clark A.G."/>
            <person name="Waterman M.S."/>
            <person name="Eichler E.E."/>
            <person name="Adams M.D."/>
            <person name="Hunkapiller M.W."/>
            <person name="Myers E.W."/>
            <person name="Venter J.C."/>
        </authorList>
    </citation>
    <scope>NUCLEOTIDE SEQUENCE [LARGE SCALE GENOMIC DNA]</scope>
</reference>
<reference key="8">
    <citation type="journal article" date="2015" name="Proteomics">
        <title>N-terminome analysis of the human mitochondrial proteome.</title>
        <authorList>
            <person name="Vaca Jacome A.S."/>
            <person name="Rabilloud T."/>
            <person name="Schaeffer-Reiss C."/>
            <person name="Rompais M."/>
            <person name="Ayoub D."/>
            <person name="Lane L."/>
            <person name="Bairoch A."/>
            <person name="Van Dorsselaer A."/>
            <person name="Carapito C."/>
        </authorList>
    </citation>
    <scope>IDENTIFICATION BY MASS SPECTROMETRY [LARGE SCALE ANALYSIS]</scope>
</reference>
<reference key="9">
    <citation type="journal article" date="2001" name="Nat. Genet.">
        <title>Mutant mitochondrial thymidine kinase in mitochondrial DNA depletion myopathy.</title>
        <authorList>
            <person name="Saada A."/>
            <person name="Shaag A."/>
            <person name="Mandel H."/>
            <person name="Nevo Y."/>
            <person name="Eriksson S."/>
            <person name="Elpeleg O."/>
        </authorList>
    </citation>
    <scope>VARIANTS MTDPS2 ASN-121 AND ASN-212</scope>
    <scope>FUNCTION</scope>
    <scope>CATALYTIC ACTIVITY</scope>
    <scope>CHARACTERIZATION OF VARIANTS MTDPS2 ASN-121 AND ASN-212</scope>
</reference>
<reference key="10">
    <citation type="journal article" date="2002" name="Neurology">
        <title>Mitochondrial DNA depletion: mutations in thymidine kinase gene with myopathy and SMA.</title>
        <authorList>
            <person name="Mancuso M."/>
            <person name="Salviati L."/>
            <person name="Sacconi S."/>
            <person name="Otaegui D."/>
            <person name="Camano P."/>
            <person name="Marina A."/>
            <person name="Bacman S."/>
            <person name="Moraes C.T."/>
            <person name="Carlo J.R."/>
            <person name="Garcia M."/>
            <person name="Garcia-Alvarez M."/>
            <person name="Monzon L."/>
            <person name="Naini A.B."/>
            <person name="Hirano M."/>
            <person name="Bonilla E."/>
            <person name="Taratuto A.L."/>
            <person name="DiMauro S."/>
            <person name="Vu T.H."/>
        </authorList>
    </citation>
    <scope>VARIANTS MTDPS2 MET-53; MET-108 AND ASN-121</scope>
</reference>
<reference key="11">
    <citation type="journal article" date="2005" name="Mol. Genet. Metab.">
        <title>Molecular insight into mitochondrial DNA depletion syndrome in two patients with novel mutations in the deoxyguanosine kinase and thymidine kinase 2 genes.</title>
        <authorList>
            <person name="Wang L."/>
            <person name="Limongelli A."/>
            <person name="Vila M.R."/>
            <person name="Carrara F."/>
            <person name="Zeviani M."/>
            <person name="Eriksson S."/>
        </authorList>
    </citation>
    <scope>VARIANTS MTDPS2 MET-108 AND LYS-192</scope>
    <scope>CHARACTERIZATION OF VARIANTS MTDPS2 MET-108 AND LYS-192</scope>
</reference>
<reference key="12">
    <citation type="journal article" date="2005" name="Neuromuscul. Disord.">
        <title>Novel mutations in the thymidine kinase 2 gene (TK2) associated with fatal mitochondrial myopathy and mitochondrial DNA depletion.</title>
        <authorList>
            <person name="Tulinius M."/>
            <person name="Moslemi A.-R."/>
            <person name="Darin N."/>
            <person name="Holme E."/>
            <person name="Oldfors A."/>
        </authorList>
    </citation>
    <scope>VARIANTS MTDPS2 MET-64 AND TRP-183</scope>
</reference>
<reference key="13">
    <citation type="journal article" date="2012" name="Hum. Mol. Genet.">
        <title>Thymidine kinase 2 mutations in autosomal recessive progressive external ophthalmoplegia with multiple mitochondrial DNA deletions.</title>
        <authorList>
            <person name="Tyynismaa H."/>
            <person name="Sun R."/>
            <person name="Ahola-Erkkilae S."/>
            <person name="Almusa H."/>
            <person name="Poeyhoenen R."/>
            <person name="Korpela M."/>
            <person name="Honkaniemi J."/>
            <person name="Isohanni P."/>
            <person name="Paetau A."/>
            <person name="Wang L."/>
            <person name="Suomalainen A."/>
        </authorList>
    </citation>
    <scope>INVOLVEMENT IN PEOB3</scope>
    <scope>VARIANTS PEOB3 TRP-183 AND ALA-188</scope>
    <scope>CHARACTERIZATION OF VARIANTS PEOB3 TRP-183 AND ALA-188</scope>
    <scope>SUBUNIT</scope>
</reference>
<reference key="14">
    <citation type="journal article" date="2015" name="Mitochondrion">
        <title>Clinical application of whole exome sequencing reveals a novel compound heterozygous TK2-mutation in two brothers with rapidly progressive combined muscle-brain atrophy, axonal neuropathy, and status epilepticus.</title>
        <authorList>
            <person name="Knierim E."/>
            <person name="Seelow D."/>
            <person name="Gill E."/>
            <person name="von Moers A."/>
            <person name="Schuelke M."/>
        </authorList>
    </citation>
    <scope>VARIANTS MTDPS2 VAL-117 AND VAL-139</scope>
</reference>
<keyword id="KW-0025">Alternative splicing</keyword>
<keyword id="KW-0067">ATP-binding</keyword>
<keyword id="KW-0903">Direct protein sequencing</keyword>
<keyword id="KW-0225">Disease variant</keyword>
<keyword id="KW-0237">DNA synthesis</keyword>
<keyword id="KW-0418">Kinase</keyword>
<keyword id="KW-0496">Mitochondrion</keyword>
<keyword id="KW-0547">Nucleotide-binding</keyword>
<keyword id="KW-1274">Primary mitochondrial disease</keyword>
<keyword id="KW-0935">Progressive external ophthalmoplegia</keyword>
<keyword id="KW-1267">Proteomics identification</keyword>
<keyword id="KW-1185">Reference proteome</keyword>
<keyword id="KW-0808">Transferase</keyword>
<keyword id="KW-0809">Transit peptide</keyword>